<name>HCP_SHEWM</name>
<reference key="1">
    <citation type="submission" date="2008-02" db="EMBL/GenBank/DDBJ databases">
        <title>Complete sequence of Shewanella woodyi ATCC 51908.</title>
        <authorList>
            <consortium name="US DOE Joint Genome Institute"/>
            <person name="Copeland A."/>
            <person name="Lucas S."/>
            <person name="Lapidus A."/>
            <person name="Glavina del Rio T."/>
            <person name="Dalin E."/>
            <person name="Tice H."/>
            <person name="Bruce D."/>
            <person name="Goodwin L."/>
            <person name="Pitluck S."/>
            <person name="Sims D."/>
            <person name="Brettin T."/>
            <person name="Detter J.C."/>
            <person name="Han C."/>
            <person name="Kuske C.R."/>
            <person name="Schmutz J."/>
            <person name="Larimer F."/>
            <person name="Land M."/>
            <person name="Hauser L."/>
            <person name="Kyrpides N."/>
            <person name="Lykidis A."/>
            <person name="Zhao J.-S."/>
            <person name="Richardson P."/>
        </authorList>
    </citation>
    <scope>NUCLEOTIDE SEQUENCE [LARGE SCALE GENOMIC DNA]</scope>
    <source>
        <strain>ATCC 51908 / MS32</strain>
    </source>
</reference>
<keyword id="KW-0001">2Fe-2S</keyword>
<keyword id="KW-0963">Cytoplasm</keyword>
<keyword id="KW-0408">Iron</keyword>
<keyword id="KW-0411">Iron-sulfur</keyword>
<keyword id="KW-0479">Metal-binding</keyword>
<keyword id="KW-0560">Oxidoreductase</keyword>
<keyword id="KW-1185">Reference proteome</keyword>
<dbReference type="EC" id="1.7.99.1" evidence="1"/>
<dbReference type="EMBL" id="CP000961">
    <property type="protein sequence ID" value="ACA85552.1"/>
    <property type="molecule type" value="Genomic_DNA"/>
</dbReference>
<dbReference type="RefSeq" id="WP_012323898.1">
    <property type="nucleotide sequence ID" value="NC_010506.1"/>
</dbReference>
<dbReference type="SMR" id="B1KI74"/>
<dbReference type="STRING" id="392500.Swoo_1260"/>
<dbReference type="KEGG" id="swd:Swoo_1260"/>
<dbReference type="eggNOG" id="COG1151">
    <property type="taxonomic scope" value="Bacteria"/>
</dbReference>
<dbReference type="HOGENOM" id="CLU_038344_2_0_6"/>
<dbReference type="Proteomes" id="UP000002168">
    <property type="component" value="Chromosome"/>
</dbReference>
<dbReference type="GO" id="GO:0005737">
    <property type="term" value="C:cytoplasm"/>
    <property type="evidence" value="ECO:0007669"/>
    <property type="project" value="UniProtKB-SubCell"/>
</dbReference>
<dbReference type="GO" id="GO:0051537">
    <property type="term" value="F:2 iron, 2 sulfur cluster binding"/>
    <property type="evidence" value="ECO:0007669"/>
    <property type="project" value="UniProtKB-KW"/>
</dbReference>
<dbReference type="GO" id="GO:0050418">
    <property type="term" value="F:hydroxylamine reductase activity"/>
    <property type="evidence" value="ECO:0007669"/>
    <property type="project" value="UniProtKB-UniRule"/>
</dbReference>
<dbReference type="GO" id="GO:0046872">
    <property type="term" value="F:metal ion binding"/>
    <property type="evidence" value="ECO:0007669"/>
    <property type="project" value="UniProtKB-KW"/>
</dbReference>
<dbReference type="GO" id="GO:0004601">
    <property type="term" value="F:peroxidase activity"/>
    <property type="evidence" value="ECO:0007669"/>
    <property type="project" value="TreeGrafter"/>
</dbReference>
<dbReference type="GO" id="GO:0042542">
    <property type="term" value="P:response to hydrogen peroxide"/>
    <property type="evidence" value="ECO:0007669"/>
    <property type="project" value="TreeGrafter"/>
</dbReference>
<dbReference type="CDD" id="cd01914">
    <property type="entry name" value="HCP"/>
    <property type="match status" value="1"/>
</dbReference>
<dbReference type="FunFam" id="1.20.1270.20:FF:000001">
    <property type="entry name" value="Hydroxylamine reductase"/>
    <property type="match status" value="1"/>
</dbReference>
<dbReference type="FunFam" id="1.20.1270.20:FF:000002">
    <property type="entry name" value="Hydroxylamine reductase"/>
    <property type="match status" value="1"/>
</dbReference>
<dbReference type="FunFam" id="3.40.50.2030:FF:000001">
    <property type="entry name" value="Hydroxylamine reductase"/>
    <property type="match status" value="1"/>
</dbReference>
<dbReference type="FunFam" id="3.40.50.2030:FF:000002">
    <property type="entry name" value="Hydroxylamine reductase"/>
    <property type="match status" value="1"/>
</dbReference>
<dbReference type="Gene3D" id="1.20.1270.20">
    <property type="match status" value="2"/>
</dbReference>
<dbReference type="Gene3D" id="3.40.50.2030">
    <property type="match status" value="2"/>
</dbReference>
<dbReference type="HAMAP" id="MF_00069">
    <property type="entry name" value="Hydroxylam_reduct"/>
    <property type="match status" value="1"/>
</dbReference>
<dbReference type="InterPro" id="IPR004137">
    <property type="entry name" value="HCP/CODH"/>
</dbReference>
<dbReference type="InterPro" id="IPR010048">
    <property type="entry name" value="Hydroxylam_reduct"/>
</dbReference>
<dbReference type="InterPro" id="IPR016099">
    <property type="entry name" value="Prismane-like_a/b-sand"/>
</dbReference>
<dbReference type="InterPro" id="IPR011254">
    <property type="entry name" value="Prismane-like_sf"/>
</dbReference>
<dbReference type="InterPro" id="IPR016100">
    <property type="entry name" value="Prismane_a-bundle"/>
</dbReference>
<dbReference type="NCBIfam" id="TIGR01703">
    <property type="entry name" value="hybrid_clust"/>
    <property type="match status" value="1"/>
</dbReference>
<dbReference type="NCBIfam" id="NF003658">
    <property type="entry name" value="PRK05290.1"/>
    <property type="match status" value="1"/>
</dbReference>
<dbReference type="PANTHER" id="PTHR30109">
    <property type="entry name" value="HYDROXYLAMINE REDUCTASE"/>
    <property type="match status" value="1"/>
</dbReference>
<dbReference type="PANTHER" id="PTHR30109:SF0">
    <property type="entry name" value="HYDROXYLAMINE REDUCTASE"/>
    <property type="match status" value="1"/>
</dbReference>
<dbReference type="Pfam" id="PF03063">
    <property type="entry name" value="Prismane"/>
    <property type="match status" value="1"/>
</dbReference>
<dbReference type="PIRSF" id="PIRSF000076">
    <property type="entry name" value="HCP"/>
    <property type="match status" value="1"/>
</dbReference>
<dbReference type="SUPFAM" id="SSF56821">
    <property type="entry name" value="Prismane protein-like"/>
    <property type="match status" value="1"/>
</dbReference>
<organism>
    <name type="scientific">Shewanella woodyi (strain ATCC 51908 / MS32)</name>
    <dbReference type="NCBI Taxonomy" id="392500"/>
    <lineage>
        <taxon>Bacteria</taxon>
        <taxon>Pseudomonadati</taxon>
        <taxon>Pseudomonadota</taxon>
        <taxon>Gammaproteobacteria</taxon>
        <taxon>Alteromonadales</taxon>
        <taxon>Shewanellaceae</taxon>
        <taxon>Shewanella</taxon>
    </lineage>
</organism>
<gene>
    <name evidence="1" type="primary">hcp</name>
    <name type="ordered locus">Swoo_1260</name>
</gene>
<feature type="chain" id="PRO_1000092352" description="Hydroxylamine reductase">
    <location>
        <begin position="1"/>
        <end position="552"/>
    </location>
</feature>
<feature type="binding site" evidence="1">
    <location>
        <position position="3"/>
    </location>
    <ligand>
        <name>[2Fe-2S] cluster</name>
        <dbReference type="ChEBI" id="CHEBI:190135"/>
    </ligand>
</feature>
<feature type="binding site" evidence="1">
    <location>
        <position position="6"/>
    </location>
    <ligand>
        <name>[2Fe-2S] cluster</name>
        <dbReference type="ChEBI" id="CHEBI:190135"/>
    </ligand>
</feature>
<feature type="binding site" evidence="1">
    <location>
        <position position="18"/>
    </location>
    <ligand>
        <name>[2Fe-2S] cluster</name>
        <dbReference type="ChEBI" id="CHEBI:190135"/>
    </ligand>
</feature>
<feature type="binding site" evidence="1">
    <location>
        <position position="25"/>
    </location>
    <ligand>
        <name>[2Fe-2S] cluster</name>
        <dbReference type="ChEBI" id="CHEBI:190135"/>
    </ligand>
</feature>
<feature type="binding site" evidence="1">
    <location>
        <position position="250"/>
    </location>
    <ligand>
        <name>hybrid [4Fe-2O-2S] cluster</name>
        <dbReference type="ChEBI" id="CHEBI:60519"/>
    </ligand>
</feature>
<feature type="binding site" evidence="1">
    <location>
        <position position="274"/>
    </location>
    <ligand>
        <name>hybrid [4Fe-2O-2S] cluster</name>
        <dbReference type="ChEBI" id="CHEBI:60519"/>
    </ligand>
</feature>
<feature type="binding site" evidence="1">
    <location>
        <position position="318"/>
    </location>
    <ligand>
        <name>hybrid [4Fe-2O-2S] cluster</name>
        <dbReference type="ChEBI" id="CHEBI:60519"/>
    </ligand>
</feature>
<feature type="binding site" description="via persulfide group" evidence="1">
    <location>
        <position position="406"/>
    </location>
    <ligand>
        <name>hybrid [4Fe-2O-2S] cluster</name>
        <dbReference type="ChEBI" id="CHEBI:60519"/>
    </ligand>
</feature>
<feature type="binding site" evidence="1">
    <location>
        <position position="434"/>
    </location>
    <ligand>
        <name>hybrid [4Fe-2O-2S] cluster</name>
        <dbReference type="ChEBI" id="CHEBI:60519"/>
    </ligand>
</feature>
<feature type="binding site" evidence="1">
    <location>
        <position position="459"/>
    </location>
    <ligand>
        <name>hybrid [4Fe-2O-2S] cluster</name>
        <dbReference type="ChEBI" id="CHEBI:60519"/>
    </ligand>
</feature>
<feature type="binding site" evidence="1">
    <location>
        <position position="493"/>
    </location>
    <ligand>
        <name>hybrid [4Fe-2O-2S] cluster</name>
        <dbReference type="ChEBI" id="CHEBI:60519"/>
    </ligand>
</feature>
<feature type="binding site" evidence="1">
    <location>
        <position position="495"/>
    </location>
    <ligand>
        <name>hybrid [4Fe-2O-2S] cluster</name>
        <dbReference type="ChEBI" id="CHEBI:60519"/>
    </ligand>
</feature>
<feature type="modified residue" description="Cysteine persulfide" evidence="1">
    <location>
        <position position="406"/>
    </location>
</feature>
<comment type="function">
    <text evidence="1">Catalyzes the reduction of hydroxylamine to form NH(3) and H(2)O.</text>
</comment>
<comment type="catalytic activity">
    <reaction evidence="1">
        <text>A + NH4(+) + H2O = hydroxylamine + AH2 + H(+)</text>
        <dbReference type="Rhea" id="RHEA:22052"/>
        <dbReference type="ChEBI" id="CHEBI:13193"/>
        <dbReference type="ChEBI" id="CHEBI:15377"/>
        <dbReference type="ChEBI" id="CHEBI:15378"/>
        <dbReference type="ChEBI" id="CHEBI:15429"/>
        <dbReference type="ChEBI" id="CHEBI:17499"/>
        <dbReference type="ChEBI" id="CHEBI:28938"/>
        <dbReference type="EC" id="1.7.99.1"/>
    </reaction>
</comment>
<comment type="cofactor">
    <cofactor evidence="1">
        <name>[2Fe-2S] cluster</name>
        <dbReference type="ChEBI" id="CHEBI:190135"/>
    </cofactor>
    <text evidence="1">Binds 1 [2Fe-2S] cluster.</text>
</comment>
<comment type="cofactor">
    <cofactor evidence="1">
        <name>hybrid [4Fe-2O-2S] cluster</name>
        <dbReference type="ChEBI" id="CHEBI:60519"/>
    </cofactor>
    <text evidence="1">Binds 1 hybrid [4Fe-2O-2S] cluster.</text>
</comment>
<comment type="subcellular location">
    <subcellularLocation>
        <location evidence="1">Cytoplasm</location>
    </subcellularLocation>
</comment>
<comment type="similarity">
    <text evidence="1">Belongs to the HCP family.</text>
</comment>
<proteinExistence type="inferred from homology"/>
<accession>B1KI74</accession>
<protein>
    <recommendedName>
        <fullName evidence="1">Hydroxylamine reductase</fullName>
        <ecNumber evidence="1">1.7.99.1</ecNumber>
    </recommendedName>
    <alternativeName>
        <fullName evidence="1">Hybrid-cluster protein</fullName>
        <shortName evidence="1">HCP</shortName>
    </alternativeName>
    <alternativeName>
        <fullName evidence="1">Prismane protein</fullName>
    </alternativeName>
</protein>
<sequence length="552" mass="60221">MFCIQCEQTIRTPAGNGCSYSQGMCGKLAETSDLQDLLIYILQGVSAYAVKAREFNIIDAEIDTFVPKAFFATLTNVNFDDARLIEYVEQANTYRTRLKDAYEAQCAANGVMVAEMSAPAQLVLATAKPELLAQAPLAAPNRGDVHEDILGLRLLCLYGLKGAAAYMEHARVLDQTDAEVAGSFHEIMAFLGEDSVDVDKLFATSMEIGQLNYKVMAMLDEGETNAFGHPEPTQVNTVAVKGKAILVSGHDMVDLELILKQTEGKGINVFTHGEMLPALAYPEFKKYPHLVGNYGSAWQNQQKEFANFPGAVVMTSNCIIDPNVGNYSDRIFTRSIVGWPGVTHLVGDDFTQVIEKALALDGFIYDEIPHLITIGFARNALMAAAPAVIENVKNGSIKHFFLVGGCDGDKADRSYFTDIATQAPDDSLILTLGCGKYKFNKLEFGDINGIPRLLDIGQCNDSYSAIQLAIALSEAFECEINELPLSLVLSWFEQKAIVVLLTLLSLGVKNIRTGPTPPAFLTENLLNILEEKFGLRNTTTVEADLNTILNVA</sequence>
<evidence type="ECO:0000255" key="1">
    <source>
        <dbReference type="HAMAP-Rule" id="MF_00069"/>
    </source>
</evidence>